<reference key="1">
    <citation type="journal article" date="2005" name="Science">
        <title>The transcriptional landscape of the mammalian genome.</title>
        <authorList>
            <person name="Carninci P."/>
            <person name="Kasukawa T."/>
            <person name="Katayama S."/>
            <person name="Gough J."/>
            <person name="Frith M.C."/>
            <person name="Maeda N."/>
            <person name="Oyama R."/>
            <person name="Ravasi T."/>
            <person name="Lenhard B."/>
            <person name="Wells C."/>
            <person name="Kodzius R."/>
            <person name="Shimokawa K."/>
            <person name="Bajic V.B."/>
            <person name="Brenner S.E."/>
            <person name="Batalov S."/>
            <person name="Forrest A.R."/>
            <person name="Zavolan M."/>
            <person name="Davis M.J."/>
            <person name="Wilming L.G."/>
            <person name="Aidinis V."/>
            <person name="Allen J.E."/>
            <person name="Ambesi-Impiombato A."/>
            <person name="Apweiler R."/>
            <person name="Aturaliya R.N."/>
            <person name="Bailey T.L."/>
            <person name="Bansal M."/>
            <person name="Baxter L."/>
            <person name="Beisel K.W."/>
            <person name="Bersano T."/>
            <person name="Bono H."/>
            <person name="Chalk A.M."/>
            <person name="Chiu K.P."/>
            <person name="Choudhary V."/>
            <person name="Christoffels A."/>
            <person name="Clutterbuck D.R."/>
            <person name="Crowe M.L."/>
            <person name="Dalla E."/>
            <person name="Dalrymple B.P."/>
            <person name="de Bono B."/>
            <person name="Della Gatta G."/>
            <person name="di Bernardo D."/>
            <person name="Down T."/>
            <person name="Engstrom P."/>
            <person name="Fagiolini M."/>
            <person name="Faulkner G."/>
            <person name="Fletcher C.F."/>
            <person name="Fukushima T."/>
            <person name="Furuno M."/>
            <person name="Futaki S."/>
            <person name="Gariboldi M."/>
            <person name="Georgii-Hemming P."/>
            <person name="Gingeras T.R."/>
            <person name="Gojobori T."/>
            <person name="Green R.E."/>
            <person name="Gustincich S."/>
            <person name="Harbers M."/>
            <person name="Hayashi Y."/>
            <person name="Hensch T.K."/>
            <person name="Hirokawa N."/>
            <person name="Hill D."/>
            <person name="Huminiecki L."/>
            <person name="Iacono M."/>
            <person name="Ikeo K."/>
            <person name="Iwama A."/>
            <person name="Ishikawa T."/>
            <person name="Jakt M."/>
            <person name="Kanapin A."/>
            <person name="Katoh M."/>
            <person name="Kawasawa Y."/>
            <person name="Kelso J."/>
            <person name="Kitamura H."/>
            <person name="Kitano H."/>
            <person name="Kollias G."/>
            <person name="Krishnan S.P."/>
            <person name="Kruger A."/>
            <person name="Kummerfeld S.K."/>
            <person name="Kurochkin I.V."/>
            <person name="Lareau L.F."/>
            <person name="Lazarevic D."/>
            <person name="Lipovich L."/>
            <person name="Liu J."/>
            <person name="Liuni S."/>
            <person name="McWilliam S."/>
            <person name="Madan Babu M."/>
            <person name="Madera M."/>
            <person name="Marchionni L."/>
            <person name="Matsuda H."/>
            <person name="Matsuzawa S."/>
            <person name="Miki H."/>
            <person name="Mignone F."/>
            <person name="Miyake S."/>
            <person name="Morris K."/>
            <person name="Mottagui-Tabar S."/>
            <person name="Mulder N."/>
            <person name="Nakano N."/>
            <person name="Nakauchi H."/>
            <person name="Ng P."/>
            <person name="Nilsson R."/>
            <person name="Nishiguchi S."/>
            <person name="Nishikawa S."/>
            <person name="Nori F."/>
            <person name="Ohara O."/>
            <person name="Okazaki Y."/>
            <person name="Orlando V."/>
            <person name="Pang K.C."/>
            <person name="Pavan W.J."/>
            <person name="Pavesi G."/>
            <person name="Pesole G."/>
            <person name="Petrovsky N."/>
            <person name="Piazza S."/>
            <person name="Reed J."/>
            <person name="Reid J.F."/>
            <person name="Ring B.Z."/>
            <person name="Ringwald M."/>
            <person name="Rost B."/>
            <person name="Ruan Y."/>
            <person name="Salzberg S.L."/>
            <person name="Sandelin A."/>
            <person name="Schneider C."/>
            <person name="Schoenbach C."/>
            <person name="Sekiguchi K."/>
            <person name="Semple C.A."/>
            <person name="Seno S."/>
            <person name="Sessa L."/>
            <person name="Sheng Y."/>
            <person name="Shibata Y."/>
            <person name="Shimada H."/>
            <person name="Shimada K."/>
            <person name="Silva D."/>
            <person name="Sinclair B."/>
            <person name="Sperling S."/>
            <person name="Stupka E."/>
            <person name="Sugiura K."/>
            <person name="Sultana R."/>
            <person name="Takenaka Y."/>
            <person name="Taki K."/>
            <person name="Tammoja K."/>
            <person name="Tan S.L."/>
            <person name="Tang S."/>
            <person name="Taylor M.S."/>
            <person name="Tegner J."/>
            <person name="Teichmann S.A."/>
            <person name="Ueda H.R."/>
            <person name="van Nimwegen E."/>
            <person name="Verardo R."/>
            <person name="Wei C.L."/>
            <person name="Yagi K."/>
            <person name="Yamanishi H."/>
            <person name="Zabarovsky E."/>
            <person name="Zhu S."/>
            <person name="Zimmer A."/>
            <person name="Hide W."/>
            <person name="Bult C."/>
            <person name="Grimmond S.M."/>
            <person name="Teasdale R.D."/>
            <person name="Liu E.T."/>
            <person name="Brusic V."/>
            <person name="Quackenbush J."/>
            <person name="Wahlestedt C."/>
            <person name="Mattick J.S."/>
            <person name="Hume D.A."/>
            <person name="Kai C."/>
            <person name="Sasaki D."/>
            <person name="Tomaru Y."/>
            <person name="Fukuda S."/>
            <person name="Kanamori-Katayama M."/>
            <person name="Suzuki M."/>
            <person name="Aoki J."/>
            <person name="Arakawa T."/>
            <person name="Iida J."/>
            <person name="Imamura K."/>
            <person name="Itoh M."/>
            <person name="Kato T."/>
            <person name="Kawaji H."/>
            <person name="Kawagashira N."/>
            <person name="Kawashima T."/>
            <person name="Kojima M."/>
            <person name="Kondo S."/>
            <person name="Konno H."/>
            <person name="Nakano K."/>
            <person name="Ninomiya N."/>
            <person name="Nishio T."/>
            <person name="Okada M."/>
            <person name="Plessy C."/>
            <person name="Shibata K."/>
            <person name="Shiraki T."/>
            <person name="Suzuki S."/>
            <person name="Tagami M."/>
            <person name="Waki K."/>
            <person name="Watahiki A."/>
            <person name="Okamura-Oho Y."/>
            <person name="Suzuki H."/>
            <person name="Kawai J."/>
            <person name="Hayashizaki Y."/>
        </authorList>
    </citation>
    <scope>NUCLEOTIDE SEQUENCE [LARGE SCALE MRNA]</scope>
    <source>
        <strain>C57BL/6J</strain>
        <tissue>Head</tissue>
    </source>
</reference>
<reference key="2">
    <citation type="journal article" date="2004" name="Genome Res.">
        <title>The status, quality, and expansion of the NIH full-length cDNA project: the Mammalian Gene Collection (MGC).</title>
        <authorList>
            <consortium name="The MGC Project Team"/>
        </authorList>
    </citation>
    <scope>NUCLEOTIDE SEQUENCE [LARGE SCALE MRNA]</scope>
    <source>
        <strain>FVB/N</strain>
        <tissue>Kidney</tissue>
        <tissue>Testis</tissue>
    </source>
</reference>
<evidence type="ECO:0000256" key="1">
    <source>
        <dbReference type="SAM" id="MobiDB-lite"/>
    </source>
</evidence>
<evidence type="ECO:0000305" key="2"/>
<accession>Q8BHN9</accession>
<accession>Q8R1Z8</accession>
<dbReference type="EMBL" id="AK081297">
    <property type="protein sequence ID" value="BAC38185.1"/>
    <property type="molecule type" value="mRNA"/>
</dbReference>
<dbReference type="EMBL" id="BC022687">
    <property type="protein sequence ID" value="AAH22687.1"/>
    <property type="molecule type" value="mRNA"/>
</dbReference>
<dbReference type="EMBL" id="BC090976">
    <property type="protein sequence ID" value="AAH90976.1"/>
    <property type="molecule type" value="mRNA"/>
</dbReference>
<dbReference type="CCDS" id="CCDS49192.1"/>
<dbReference type="RefSeq" id="NP_663425.2">
    <property type="nucleotide sequence ID" value="NM_145450.3"/>
</dbReference>
<dbReference type="FunCoup" id="Q8BHN9">
    <property type="interactions" value="34"/>
</dbReference>
<dbReference type="STRING" id="10090.ENSMUSP00000038002"/>
<dbReference type="PhosphoSitePlus" id="Q8BHN9"/>
<dbReference type="PaxDb" id="10090-ENSMUSP00000038002"/>
<dbReference type="ProteomicsDB" id="279097"/>
<dbReference type="Pumba" id="Q8BHN9"/>
<dbReference type="Antibodypedia" id="54950">
    <property type="antibodies" value="32 antibodies from 9 providers"/>
</dbReference>
<dbReference type="Ensembl" id="ENSMUST00000037014.11">
    <property type="protein sequence ID" value="ENSMUSP00000038002.4"/>
    <property type="gene ID" value="ENSMUSG00000037594.12"/>
</dbReference>
<dbReference type="Ensembl" id="ENSMUST00000177808.3">
    <property type="protein sequence ID" value="ENSMUSP00000137263.2"/>
    <property type="gene ID" value="ENSMUSG00000037594.12"/>
</dbReference>
<dbReference type="GeneID" id="217887"/>
<dbReference type="KEGG" id="mmu:217887"/>
<dbReference type="UCSC" id="uc007pfg.1">
    <property type="organism name" value="mouse"/>
</dbReference>
<dbReference type="AGR" id="MGI:2443738"/>
<dbReference type="CTD" id="122616"/>
<dbReference type="MGI" id="MGI:2443738">
    <property type="gene designation" value="Clba1"/>
</dbReference>
<dbReference type="VEuPathDB" id="HostDB:ENSMUSG00000037594"/>
<dbReference type="eggNOG" id="ENOG502SPS5">
    <property type="taxonomic scope" value="Eukaryota"/>
</dbReference>
<dbReference type="GeneTree" id="ENSGT00940000154186"/>
<dbReference type="HOGENOM" id="CLU_071310_0_1_1"/>
<dbReference type="InParanoid" id="Q8BHN9"/>
<dbReference type="OMA" id="WSESHCQ"/>
<dbReference type="OrthoDB" id="9894316at2759"/>
<dbReference type="PhylomeDB" id="Q8BHN9"/>
<dbReference type="TreeFam" id="TF335916"/>
<dbReference type="BioGRID-ORCS" id="217887">
    <property type="hits" value="3 hits in 79 CRISPR screens"/>
</dbReference>
<dbReference type="PRO" id="PR:Q8BHN9"/>
<dbReference type="Proteomes" id="UP000000589">
    <property type="component" value="Chromosome 12"/>
</dbReference>
<dbReference type="RNAct" id="Q8BHN9">
    <property type="molecule type" value="protein"/>
</dbReference>
<dbReference type="Bgee" id="ENSMUSG00000037594">
    <property type="expression patterns" value="Expressed in proximal tubule and 65 other cell types or tissues"/>
</dbReference>
<dbReference type="GO" id="GO:0032588">
    <property type="term" value="C:trans-Golgi network membrane"/>
    <property type="evidence" value="ECO:0007669"/>
    <property type="project" value="InterPro"/>
</dbReference>
<dbReference type="GO" id="GO:0030276">
    <property type="term" value="F:clathrin binding"/>
    <property type="evidence" value="ECO:0007669"/>
    <property type="project" value="InterPro"/>
</dbReference>
<dbReference type="GO" id="GO:0046907">
    <property type="term" value="P:intracellular transport"/>
    <property type="evidence" value="ECO:0007669"/>
    <property type="project" value="InterPro"/>
</dbReference>
<dbReference type="InterPro" id="IPR046359">
    <property type="entry name" value="Aftin-like"/>
</dbReference>
<dbReference type="InterPro" id="IPR029205">
    <property type="entry name" value="Clathrin-bd"/>
</dbReference>
<dbReference type="PANTHER" id="PTHR16156">
    <property type="entry name" value="AFTIPHILIN A-RELATED"/>
    <property type="match status" value="1"/>
</dbReference>
<dbReference type="PANTHER" id="PTHR16156:SF7">
    <property type="entry name" value="CLATHRIN BINDING BOX OF AFTIPHILIN CONTAINING 1"/>
    <property type="match status" value="1"/>
</dbReference>
<dbReference type="Pfam" id="PF15045">
    <property type="entry name" value="Clathrin_bdg"/>
    <property type="match status" value="1"/>
</dbReference>
<keyword id="KW-1185">Reference proteome</keyword>
<protein>
    <recommendedName>
        <fullName evidence="2">Uncharacterized protein CLBA1</fullName>
    </recommendedName>
    <alternativeName>
        <fullName>Clathrin-binding box of aftiphilin-containing protein 1</fullName>
    </alternativeName>
</protein>
<feature type="chain" id="PRO_0000274388" description="Uncharacterized protein CLBA1">
    <location>
        <begin position="1"/>
        <end position="321"/>
    </location>
</feature>
<feature type="region of interest" description="Disordered" evidence="1">
    <location>
        <begin position="1"/>
        <end position="80"/>
    </location>
</feature>
<feature type="sequence conflict" description="In Ref. 2; AAH22687." evidence="2" ref="2">
    <original>T</original>
    <variation>A</variation>
    <location>
        <position position="52"/>
    </location>
</feature>
<feature type="sequence conflict" description="In Ref. 2; AAH22687." evidence="2" ref="2">
    <original>PS</original>
    <variation>LC</variation>
    <location>
        <begin position="143"/>
        <end position="144"/>
    </location>
</feature>
<feature type="sequence conflict" description="In Ref. 2; AAH22687." evidence="2" ref="2">
    <original>L</original>
    <variation>F</variation>
    <location>
        <position position="244"/>
    </location>
</feature>
<gene>
    <name type="primary">Clba1</name>
</gene>
<sequence>MQGGQEVGRESVSDLAEEPGEGSPHQTARGQSGDGLERRRICCDGPVVLPDTNANSSRLDEGLPTSCPHPGELSGGWGEFEGFRESSAKSEQFSQSFELLGRATECQPLRTPSVPEEGSSCQVQQGGPWVTGTAAGPSSESIPSYEKVFRLAFQEVAVEQAPEDVCSLDHFLERSNEGAASVPRLCSESRKLWRALQNTDTASASRCLWGESHCRENLLPVLGVDAAQKSPPGGQGHVLEGSDLRKPEELLAVSGFHLHHCKALIQTKLSGTSSSRQGSLITYSLFLKTPLQGNGRYITIPQKKIFTPRNLKMAFFNNDVC</sequence>
<organism>
    <name type="scientific">Mus musculus</name>
    <name type="common">Mouse</name>
    <dbReference type="NCBI Taxonomy" id="10090"/>
    <lineage>
        <taxon>Eukaryota</taxon>
        <taxon>Metazoa</taxon>
        <taxon>Chordata</taxon>
        <taxon>Craniata</taxon>
        <taxon>Vertebrata</taxon>
        <taxon>Euteleostomi</taxon>
        <taxon>Mammalia</taxon>
        <taxon>Eutheria</taxon>
        <taxon>Euarchontoglires</taxon>
        <taxon>Glires</taxon>
        <taxon>Rodentia</taxon>
        <taxon>Myomorpha</taxon>
        <taxon>Muroidea</taxon>
        <taxon>Muridae</taxon>
        <taxon>Murinae</taxon>
        <taxon>Mus</taxon>
        <taxon>Mus</taxon>
    </lineage>
</organism>
<proteinExistence type="evidence at transcript level"/>
<name>CLBA1_MOUSE</name>